<feature type="chain" id="PRO_0000057456" description="tRNA pseudouridine synthase A">
    <location>
        <begin position="1"/>
        <end position="267"/>
    </location>
</feature>
<feature type="active site" description="Nucleophile" evidence="1">
    <location>
        <position position="51"/>
    </location>
</feature>
<feature type="binding site" evidence="1">
    <location>
        <position position="109"/>
    </location>
    <ligand>
        <name>substrate</name>
    </ligand>
</feature>
<proteinExistence type="inferred from homology"/>
<comment type="function">
    <text evidence="1">Formation of pseudouridine at positions 38, 39 and 40 in the anticodon stem and loop of transfer RNAs.</text>
</comment>
<comment type="catalytic activity">
    <reaction evidence="1">
        <text>uridine(38/39/40) in tRNA = pseudouridine(38/39/40) in tRNA</text>
        <dbReference type="Rhea" id="RHEA:22376"/>
        <dbReference type="Rhea" id="RHEA-COMP:10085"/>
        <dbReference type="Rhea" id="RHEA-COMP:10087"/>
        <dbReference type="ChEBI" id="CHEBI:65314"/>
        <dbReference type="ChEBI" id="CHEBI:65315"/>
        <dbReference type="EC" id="5.4.99.12"/>
    </reaction>
</comment>
<comment type="subunit">
    <text evidence="1">Homodimer.</text>
</comment>
<comment type="similarity">
    <text evidence="1">Belongs to the tRNA pseudouridine synthase TruA family.</text>
</comment>
<reference key="1">
    <citation type="journal article" date="2005" name="J. Bacteriol.">
        <title>Insights on evolution of virulence and resistance from the complete genome analysis of an early methicillin-resistant Staphylococcus aureus strain and a biofilm-producing methicillin-resistant Staphylococcus epidermidis strain.</title>
        <authorList>
            <person name="Gill S.R."/>
            <person name="Fouts D.E."/>
            <person name="Archer G.L."/>
            <person name="Mongodin E.F."/>
            <person name="DeBoy R.T."/>
            <person name="Ravel J."/>
            <person name="Paulsen I.T."/>
            <person name="Kolonay J.F."/>
            <person name="Brinkac L.M."/>
            <person name="Beanan M.J."/>
            <person name="Dodson R.J."/>
            <person name="Daugherty S.C."/>
            <person name="Madupu R."/>
            <person name="Angiuoli S.V."/>
            <person name="Durkin A.S."/>
            <person name="Haft D.H."/>
            <person name="Vamathevan J.J."/>
            <person name="Khouri H."/>
            <person name="Utterback T.R."/>
            <person name="Lee C."/>
            <person name="Dimitrov G."/>
            <person name="Jiang L."/>
            <person name="Qin H."/>
            <person name="Weidman J."/>
            <person name="Tran K."/>
            <person name="Kang K.H."/>
            <person name="Hance I.R."/>
            <person name="Nelson K.E."/>
            <person name="Fraser C.M."/>
        </authorList>
    </citation>
    <scope>NUCLEOTIDE SEQUENCE [LARGE SCALE GENOMIC DNA]</scope>
    <source>
        <strain>ATCC 35984 / DSM 28319 / BCRC 17069 / CCUG 31568 / BM 3577 / RP62A</strain>
    </source>
</reference>
<evidence type="ECO:0000255" key="1">
    <source>
        <dbReference type="HAMAP-Rule" id="MF_00171"/>
    </source>
</evidence>
<accession>Q5HM30</accession>
<dbReference type="EC" id="5.4.99.12" evidence="1"/>
<dbReference type="EMBL" id="CP000029">
    <property type="protein sequence ID" value="AAW55193.1"/>
    <property type="molecule type" value="Genomic_DNA"/>
</dbReference>
<dbReference type="RefSeq" id="WP_002456990.1">
    <property type="nucleotide sequence ID" value="NC_002976.3"/>
</dbReference>
<dbReference type="SMR" id="Q5HM30"/>
<dbReference type="STRING" id="176279.SERP1800"/>
<dbReference type="GeneID" id="50018104"/>
<dbReference type="KEGG" id="ser:SERP1800"/>
<dbReference type="eggNOG" id="COG0101">
    <property type="taxonomic scope" value="Bacteria"/>
</dbReference>
<dbReference type="HOGENOM" id="CLU_014673_0_1_9"/>
<dbReference type="Proteomes" id="UP000000531">
    <property type="component" value="Chromosome"/>
</dbReference>
<dbReference type="GO" id="GO:0003723">
    <property type="term" value="F:RNA binding"/>
    <property type="evidence" value="ECO:0007669"/>
    <property type="project" value="InterPro"/>
</dbReference>
<dbReference type="GO" id="GO:0160147">
    <property type="term" value="F:tRNA pseudouridine(38-40) synthase activity"/>
    <property type="evidence" value="ECO:0007669"/>
    <property type="project" value="UniProtKB-EC"/>
</dbReference>
<dbReference type="GO" id="GO:0031119">
    <property type="term" value="P:tRNA pseudouridine synthesis"/>
    <property type="evidence" value="ECO:0007669"/>
    <property type="project" value="UniProtKB-UniRule"/>
</dbReference>
<dbReference type="CDD" id="cd02570">
    <property type="entry name" value="PseudoU_synth_EcTruA"/>
    <property type="match status" value="1"/>
</dbReference>
<dbReference type="FunFam" id="3.30.70.580:FF:000001">
    <property type="entry name" value="tRNA pseudouridine synthase A"/>
    <property type="match status" value="1"/>
</dbReference>
<dbReference type="Gene3D" id="3.30.70.660">
    <property type="entry name" value="Pseudouridine synthase I, catalytic domain, C-terminal subdomain"/>
    <property type="match status" value="1"/>
</dbReference>
<dbReference type="Gene3D" id="3.30.70.580">
    <property type="entry name" value="Pseudouridine synthase I, catalytic domain, N-terminal subdomain"/>
    <property type="match status" value="1"/>
</dbReference>
<dbReference type="HAMAP" id="MF_00171">
    <property type="entry name" value="TruA"/>
    <property type="match status" value="1"/>
</dbReference>
<dbReference type="InterPro" id="IPR020103">
    <property type="entry name" value="PsdUridine_synth_cat_dom_sf"/>
</dbReference>
<dbReference type="InterPro" id="IPR001406">
    <property type="entry name" value="PsdUridine_synth_TruA"/>
</dbReference>
<dbReference type="InterPro" id="IPR020097">
    <property type="entry name" value="PsdUridine_synth_TruA_a/b_dom"/>
</dbReference>
<dbReference type="InterPro" id="IPR020095">
    <property type="entry name" value="PsdUridine_synth_TruA_C"/>
</dbReference>
<dbReference type="InterPro" id="IPR020094">
    <property type="entry name" value="TruA/RsuA/RluB/E/F_N"/>
</dbReference>
<dbReference type="NCBIfam" id="TIGR00071">
    <property type="entry name" value="hisT_truA"/>
    <property type="match status" value="1"/>
</dbReference>
<dbReference type="PANTHER" id="PTHR11142">
    <property type="entry name" value="PSEUDOURIDYLATE SYNTHASE"/>
    <property type="match status" value="1"/>
</dbReference>
<dbReference type="PANTHER" id="PTHR11142:SF0">
    <property type="entry name" value="TRNA PSEUDOURIDINE SYNTHASE-LIKE 1"/>
    <property type="match status" value="1"/>
</dbReference>
<dbReference type="Pfam" id="PF01416">
    <property type="entry name" value="PseudoU_synth_1"/>
    <property type="match status" value="2"/>
</dbReference>
<dbReference type="PIRSF" id="PIRSF001430">
    <property type="entry name" value="tRNA_psdUrid_synth"/>
    <property type="match status" value="1"/>
</dbReference>
<dbReference type="SUPFAM" id="SSF55120">
    <property type="entry name" value="Pseudouridine synthase"/>
    <property type="match status" value="1"/>
</dbReference>
<keyword id="KW-0413">Isomerase</keyword>
<keyword id="KW-1185">Reference proteome</keyword>
<keyword id="KW-0819">tRNA processing</keyword>
<protein>
    <recommendedName>
        <fullName evidence="1">tRNA pseudouridine synthase A</fullName>
        <ecNumber evidence="1">5.4.99.12</ecNumber>
    </recommendedName>
    <alternativeName>
        <fullName evidence="1">tRNA pseudouridine(38-40) synthase</fullName>
    </alternativeName>
    <alternativeName>
        <fullName evidence="1">tRNA pseudouridylate synthase I</fullName>
    </alternativeName>
    <alternativeName>
        <fullName evidence="1">tRNA-uridine isomerase I</fullName>
    </alternativeName>
</protein>
<name>TRUA_STAEQ</name>
<organism>
    <name type="scientific">Staphylococcus epidermidis (strain ATCC 35984 / DSM 28319 / BCRC 17069 / CCUG 31568 / BM 3577 / RP62A)</name>
    <dbReference type="NCBI Taxonomy" id="176279"/>
    <lineage>
        <taxon>Bacteria</taxon>
        <taxon>Bacillati</taxon>
        <taxon>Bacillota</taxon>
        <taxon>Bacilli</taxon>
        <taxon>Bacillales</taxon>
        <taxon>Staphylococcaceae</taxon>
        <taxon>Staphylococcus</taxon>
    </lineage>
</organism>
<gene>
    <name evidence="1" type="primary">truA</name>
    <name type="ordered locus">SERP1800</name>
</gene>
<sequence>MRILVEIAYQGNQFLGFQIQQQGRTVQQQFEKILKRMHKHHVRIHPSSRTDRGVHAYQQFFHFDTELNIDNKQWQYAMNRALPDDIYVKNVRNVDEYFHCRYDCVGKRYRYKVYQGNHRNPFKSGTETFVNETLDYDKMNKAAQEFIGTHDFTGFCSQKTEVESKVRTLYQSEIVATKEGFDYVVTGSGFLYNMVRVLVAFLIEVGKGKREPNDVPKLLEDKNRNNVPLTAPPDGLYLEKIYLSPEELIQEYGKDVKIHYKKSLEKH</sequence>